<comment type="function">
    <text evidence="1">Catalyzes the dephosphorylation of undecaprenyl diphosphate (UPP). Confers resistance to bacitracin.</text>
</comment>
<comment type="catalytic activity">
    <reaction evidence="1">
        <text>di-trans,octa-cis-undecaprenyl diphosphate + H2O = di-trans,octa-cis-undecaprenyl phosphate + phosphate + H(+)</text>
        <dbReference type="Rhea" id="RHEA:28094"/>
        <dbReference type="ChEBI" id="CHEBI:15377"/>
        <dbReference type="ChEBI" id="CHEBI:15378"/>
        <dbReference type="ChEBI" id="CHEBI:43474"/>
        <dbReference type="ChEBI" id="CHEBI:58405"/>
        <dbReference type="ChEBI" id="CHEBI:60392"/>
        <dbReference type="EC" id="3.6.1.27"/>
    </reaction>
</comment>
<comment type="subcellular location">
    <subcellularLocation>
        <location evidence="1">Cell membrane</location>
        <topology evidence="1">Multi-pass membrane protein</topology>
    </subcellularLocation>
</comment>
<comment type="miscellaneous">
    <text>Bacitracin is thought to be involved in the inhibition of peptidoglycan synthesis by sequestering undecaprenyl diphosphate, thereby reducing the pool of lipid carrier available.</text>
</comment>
<comment type="similarity">
    <text evidence="1">Belongs to the UppP family.</text>
</comment>
<comment type="sequence caution" evidence="2">
    <conflict type="erroneous initiation">
        <sequence resource="EMBL-CDS" id="ABG09265"/>
    </conflict>
</comment>
<gene>
    <name evidence="1" type="primary">uppP</name>
    <name type="ordered locus">Mmcs_3158</name>
</gene>
<keyword id="KW-0046">Antibiotic resistance</keyword>
<keyword id="KW-1003">Cell membrane</keyword>
<keyword id="KW-0133">Cell shape</keyword>
<keyword id="KW-0961">Cell wall biogenesis/degradation</keyword>
<keyword id="KW-0378">Hydrolase</keyword>
<keyword id="KW-0472">Membrane</keyword>
<keyword id="KW-0573">Peptidoglycan synthesis</keyword>
<keyword id="KW-0812">Transmembrane</keyword>
<keyword id="KW-1133">Transmembrane helix</keyword>
<reference key="1">
    <citation type="submission" date="2006-06" db="EMBL/GenBank/DDBJ databases">
        <title>Complete sequence of chromosome of Mycobacterium sp. MCS.</title>
        <authorList>
            <consortium name="US DOE Joint Genome Institute"/>
            <person name="Copeland A."/>
            <person name="Lucas S."/>
            <person name="Lapidus A."/>
            <person name="Barry K."/>
            <person name="Detter J.C."/>
            <person name="Glavina del Rio T."/>
            <person name="Hammon N."/>
            <person name="Israni S."/>
            <person name="Dalin E."/>
            <person name="Tice H."/>
            <person name="Pitluck S."/>
            <person name="Martinez M."/>
            <person name="Schmutz J."/>
            <person name="Larimer F."/>
            <person name="Land M."/>
            <person name="Hauser L."/>
            <person name="Kyrpides N."/>
            <person name="Kim E."/>
            <person name="Miller C.D."/>
            <person name="Hughes J.E."/>
            <person name="Anderson A.J."/>
            <person name="Sims R.C."/>
            <person name="Richardson P."/>
        </authorList>
    </citation>
    <scope>NUCLEOTIDE SEQUENCE [LARGE SCALE GENOMIC DNA]</scope>
    <source>
        <strain>MCS</strain>
    </source>
</reference>
<organism>
    <name type="scientific">Mycobacterium sp. (strain MCS)</name>
    <dbReference type="NCBI Taxonomy" id="164756"/>
    <lineage>
        <taxon>Bacteria</taxon>
        <taxon>Bacillati</taxon>
        <taxon>Actinomycetota</taxon>
        <taxon>Actinomycetes</taxon>
        <taxon>Mycobacteriales</taxon>
        <taxon>Mycobacteriaceae</taxon>
        <taxon>Mycobacterium</taxon>
    </lineage>
</organism>
<feature type="chain" id="PRO_0000290732" description="Undecaprenyl-diphosphatase">
    <location>
        <begin position="1"/>
        <end position="276"/>
    </location>
</feature>
<feature type="transmembrane region" description="Helical" evidence="1">
    <location>
        <begin position="1"/>
        <end position="21"/>
    </location>
</feature>
<feature type="transmembrane region" description="Helical" evidence="1">
    <location>
        <begin position="39"/>
        <end position="59"/>
    </location>
</feature>
<feature type="transmembrane region" description="Helical" evidence="1">
    <location>
        <begin position="84"/>
        <end position="104"/>
    </location>
</feature>
<feature type="transmembrane region" description="Helical" evidence="1">
    <location>
        <begin position="115"/>
        <end position="135"/>
    </location>
</feature>
<feature type="transmembrane region" description="Helical" evidence="1">
    <location>
        <begin position="159"/>
        <end position="179"/>
    </location>
</feature>
<feature type="transmembrane region" description="Helical" evidence="1">
    <location>
        <begin position="190"/>
        <end position="210"/>
    </location>
</feature>
<feature type="transmembrane region" description="Helical" evidence="1">
    <location>
        <begin position="222"/>
        <end position="242"/>
    </location>
</feature>
<feature type="transmembrane region" description="Helical" evidence="1">
    <location>
        <begin position="253"/>
        <end position="273"/>
    </location>
</feature>
<dbReference type="EC" id="3.6.1.27" evidence="1"/>
<dbReference type="EMBL" id="CP000384">
    <property type="protein sequence ID" value="ABG09265.1"/>
    <property type="status" value="ALT_INIT"/>
    <property type="molecule type" value="Genomic_DNA"/>
</dbReference>
<dbReference type="SMR" id="Q1B769"/>
<dbReference type="KEGG" id="mmc:Mmcs_3158"/>
<dbReference type="HOGENOM" id="CLU_060296_1_0_11"/>
<dbReference type="BioCyc" id="MSP164756:G1G6O-3223-MONOMER"/>
<dbReference type="GO" id="GO:0005886">
    <property type="term" value="C:plasma membrane"/>
    <property type="evidence" value="ECO:0007669"/>
    <property type="project" value="UniProtKB-SubCell"/>
</dbReference>
<dbReference type="GO" id="GO:0050380">
    <property type="term" value="F:undecaprenyl-diphosphatase activity"/>
    <property type="evidence" value="ECO:0007669"/>
    <property type="project" value="UniProtKB-UniRule"/>
</dbReference>
<dbReference type="GO" id="GO:0071555">
    <property type="term" value="P:cell wall organization"/>
    <property type="evidence" value="ECO:0007669"/>
    <property type="project" value="UniProtKB-KW"/>
</dbReference>
<dbReference type="GO" id="GO:0009252">
    <property type="term" value="P:peptidoglycan biosynthetic process"/>
    <property type="evidence" value="ECO:0007669"/>
    <property type="project" value="UniProtKB-KW"/>
</dbReference>
<dbReference type="GO" id="GO:0008360">
    <property type="term" value="P:regulation of cell shape"/>
    <property type="evidence" value="ECO:0007669"/>
    <property type="project" value="UniProtKB-KW"/>
</dbReference>
<dbReference type="GO" id="GO:0046677">
    <property type="term" value="P:response to antibiotic"/>
    <property type="evidence" value="ECO:0007669"/>
    <property type="project" value="UniProtKB-UniRule"/>
</dbReference>
<dbReference type="HAMAP" id="MF_01006">
    <property type="entry name" value="Undec_diphosphatase"/>
    <property type="match status" value="1"/>
</dbReference>
<dbReference type="InterPro" id="IPR003824">
    <property type="entry name" value="UppP"/>
</dbReference>
<dbReference type="NCBIfam" id="NF001392">
    <property type="entry name" value="PRK00281.2-1"/>
    <property type="match status" value="1"/>
</dbReference>
<dbReference type="NCBIfam" id="TIGR00753">
    <property type="entry name" value="undec_PP_bacA"/>
    <property type="match status" value="1"/>
</dbReference>
<dbReference type="PANTHER" id="PTHR30622">
    <property type="entry name" value="UNDECAPRENYL-DIPHOSPHATASE"/>
    <property type="match status" value="1"/>
</dbReference>
<dbReference type="PANTHER" id="PTHR30622:SF4">
    <property type="entry name" value="UNDECAPRENYL-DIPHOSPHATASE"/>
    <property type="match status" value="1"/>
</dbReference>
<dbReference type="Pfam" id="PF02673">
    <property type="entry name" value="BacA"/>
    <property type="match status" value="1"/>
</dbReference>
<sequence>MSWLQVIVLAVVQGLTEFLPVSSSGHLAIVSRVFFDDDAGASFTAVTQLGTEVAVLVYFARDIGRIATAWFRGLRNPGRRDADYRLGWYVIIGTIPIGVIGLLLKDEIRTAARNLWAIAIALIVFSAVIAAAEYFGRQVRHVEQLTWRDGVIVGVAQCLALLPGVSRSGATISAGLFLGLDRELAARFGFLLAIPAVFASGLFSLPDAFAPVGEGMSATGPQLLVATVIAFVVGFAAVAWFLRFLVRHGMYWFVGYRVVLGVVVLILLSTGVVAAI</sequence>
<name>UPPP_MYCSS</name>
<proteinExistence type="inferred from homology"/>
<protein>
    <recommendedName>
        <fullName evidence="1">Undecaprenyl-diphosphatase</fullName>
        <ecNumber evidence="1">3.6.1.27</ecNumber>
    </recommendedName>
    <alternativeName>
        <fullName evidence="1">Bacitracin resistance protein</fullName>
    </alternativeName>
    <alternativeName>
        <fullName evidence="1">Undecaprenyl pyrophosphate phosphatase</fullName>
    </alternativeName>
</protein>
<evidence type="ECO:0000255" key="1">
    <source>
        <dbReference type="HAMAP-Rule" id="MF_01006"/>
    </source>
</evidence>
<evidence type="ECO:0000305" key="2"/>
<accession>Q1B769</accession>